<keyword id="KW-0064">Aspartyl protease</keyword>
<keyword id="KW-0255">Endonuclease</keyword>
<keyword id="KW-0378">Hydrolase</keyword>
<keyword id="KW-0540">Nuclease</keyword>
<keyword id="KW-0548">Nucleotidyltransferase</keyword>
<keyword id="KW-0645">Protease</keyword>
<keyword id="KW-0695">RNA-directed DNA polymerase</keyword>
<keyword id="KW-0808">Transferase</keyword>
<keyword id="KW-0814">Transposable element</keyword>
<sequence length="1237" mass="143042">QQSEQLQQKQCQCTSNPRTGQLATAFRYSVEEDRRVYTINYNLNIFSTFIHAKTGVKLVFLLDTGADISILKENSDKFSNIQITNKINIQGIGQQKIQSRGQTFIEIQTGKYVIPHDFHLVDKNFPIPCDGIIGIDFIKKYNCQIDLNQEEDWFIIRPNNLKFPIYIPIAYSSGINTTLLPARSQVVRRLIVSSKDDNILIPNQEIQTGIYVANTIATSSNTFVRILNTTDSDQLVNMDTLKYEPLSNYNVVQANSEHRNKTVLSQLKKNFPELFKSQLENICSEYIDIFALESEPITVNNLYKQQLRLKDDEPVYTKNYRSPHSQVEEIQAQVQKLIKDKIVEPSVSQYNSPLLLVPKKSSPNSDKKKWRLVIDYRQINKKLLADKFPLPRIDDILDQLGRAKYFSCLDLMSGFHQIELDEGSRDITSFSTSNGSYRFTRLPFGLKIAPNSFQRMMTIAFSGIEPSQAFLYMDDLIVIGCSEKHMLKNLTEVFGKCREYNLKLHPEKCSFFMHEVTFLGHKCTDKGILPDDKKYDVIQNYPVPHDADSARRFVAFCNYYRRFIKNFADYSRHITRLCKKNVPFEWTDECQKAFIHLKSQLINPTLLQYPDFSKEFCITTDASKQACGAVLTQNHNGHQLPVAYASRAFTKGESNKSTTEQELAAIHWAIIHFRPYIYGKHFTVKTDHRPLTYLFSMVNPSSKLTRIRLELEEYNFTVEYLKGKDNHVADALSRITIKELKDITGNILKVTTRFQSRQKSCAGKEQLDLQKQTKEIASEPNVYEVITNDEVRKVVTLQLNDSICLFKHGKKIIARYDVGDLYTNGILDLDQFLQRLELQAGIYDISQIKMAPWKKIFEHVSIDKFKNMGNKILKNLKVALLNPVTQINNEKEKEAILSTLHDDPIQGGHTGITKTLAKVKRHYYWKNMSKYIKEYVRKCQKCQKAKTTKHTKTPMTITETPEHAFDRVVVDTIGPLPKSENGNEYAVTLICDLTKYLVAIPIANKSAKTVAKAIFESFILKYGPMKTFITDMGTEYKNSIITDLCKYLKIKNITSTAHHHQTVGVVERSHRTLNEYIRSYISTDKTDWDVWLQYFVYCFNTTQSMVHNYCPYELVFGRTSNLPKHFNKLHSIEPIYNIDDYAKESKYRLEVAYARARKLLEAHKEKNKENYDLKVKDIELEVGDKVLLRNEVGHKLDFKYTGPYKIESIGDNNNITLLTNKNKKQIVHKDRLKKFHS</sequence>
<organism>
    <name type="scientific">Drosophila melanogaster</name>
    <name type="common">Fruit fly</name>
    <dbReference type="NCBI Taxonomy" id="7227"/>
    <lineage>
        <taxon>Eukaryota</taxon>
        <taxon>Metazoa</taxon>
        <taxon>Ecdysozoa</taxon>
        <taxon>Arthropoda</taxon>
        <taxon>Hexapoda</taxon>
        <taxon>Insecta</taxon>
        <taxon>Pterygota</taxon>
        <taxon>Neoptera</taxon>
        <taxon>Endopterygota</taxon>
        <taxon>Diptera</taxon>
        <taxon>Brachycera</taxon>
        <taxon>Muscomorpha</taxon>
        <taxon>Ephydroidea</taxon>
        <taxon>Drosophilidae</taxon>
        <taxon>Drosophila</taxon>
        <taxon>Sophophora</taxon>
    </lineage>
</organism>
<proteinExistence type="predicted"/>
<protein>
    <recommendedName>
        <fullName>Retrovirus-related Pol polyprotein from transposon 412</fullName>
    </recommendedName>
    <domain>
        <recommendedName>
            <fullName>Protease</fullName>
            <ecNumber>3.4.23.-</ecNumber>
        </recommendedName>
    </domain>
    <domain>
        <recommendedName>
            <fullName>Reverse transcriptase</fullName>
            <ecNumber>2.7.7.49</ecNumber>
        </recommendedName>
    </domain>
    <domain>
        <recommendedName>
            <fullName>Endonuclease</fullName>
        </recommendedName>
    </domain>
</protein>
<accession>P10394</accession>
<dbReference type="EC" id="3.4.23.-"/>
<dbReference type="EC" id="2.7.7.49"/>
<dbReference type="EMBL" id="X04132">
    <property type="protein sequence ID" value="CAA27750.1"/>
    <property type="molecule type" value="Genomic_DNA"/>
</dbReference>
<dbReference type="PIR" id="D29349">
    <property type="entry name" value="GNFF42"/>
</dbReference>
<dbReference type="SMR" id="P10394"/>
<dbReference type="FlyBase" id="FBgn0043847">
    <property type="gene designation" value="412\ORF3"/>
</dbReference>
<dbReference type="PRO" id="PR:P10394"/>
<dbReference type="GO" id="GO:0042575">
    <property type="term" value="C:DNA polymerase complex"/>
    <property type="evidence" value="ECO:0007669"/>
    <property type="project" value="UniProtKB-ARBA"/>
</dbReference>
<dbReference type="GO" id="GO:0004190">
    <property type="term" value="F:aspartic-type endopeptidase activity"/>
    <property type="evidence" value="ECO:0007669"/>
    <property type="project" value="UniProtKB-KW"/>
</dbReference>
<dbReference type="GO" id="GO:0004519">
    <property type="term" value="F:endonuclease activity"/>
    <property type="evidence" value="ECO:0007669"/>
    <property type="project" value="UniProtKB-KW"/>
</dbReference>
<dbReference type="GO" id="GO:0003676">
    <property type="term" value="F:nucleic acid binding"/>
    <property type="evidence" value="ECO:0007669"/>
    <property type="project" value="InterPro"/>
</dbReference>
<dbReference type="GO" id="GO:0003964">
    <property type="term" value="F:RNA-directed DNA polymerase activity"/>
    <property type="evidence" value="ECO:0007669"/>
    <property type="project" value="UniProtKB-KW"/>
</dbReference>
<dbReference type="GO" id="GO:0015074">
    <property type="term" value="P:DNA integration"/>
    <property type="evidence" value="ECO:0007669"/>
    <property type="project" value="InterPro"/>
</dbReference>
<dbReference type="GO" id="GO:0006508">
    <property type="term" value="P:proteolysis"/>
    <property type="evidence" value="ECO:0007669"/>
    <property type="project" value="UniProtKB-KW"/>
</dbReference>
<dbReference type="CDD" id="cd09274">
    <property type="entry name" value="RNase_HI_RT_Ty3"/>
    <property type="match status" value="1"/>
</dbReference>
<dbReference type="CDD" id="cd01647">
    <property type="entry name" value="RT_LTR"/>
    <property type="match status" value="1"/>
</dbReference>
<dbReference type="FunFam" id="3.10.20.370:FF:000001">
    <property type="entry name" value="Retrovirus-related Pol polyprotein from transposon 17.6-like protein"/>
    <property type="match status" value="1"/>
</dbReference>
<dbReference type="FunFam" id="1.10.340.70:FF:000001">
    <property type="entry name" value="Retrovirus-related Pol polyprotein from transposon gypsy-like Protein"/>
    <property type="match status" value="1"/>
</dbReference>
<dbReference type="FunFam" id="3.30.70.270:FF:000020">
    <property type="entry name" value="Transposon Tf2-6 polyprotein-like Protein"/>
    <property type="match status" value="1"/>
</dbReference>
<dbReference type="Gene3D" id="1.10.340.70">
    <property type="match status" value="1"/>
</dbReference>
<dbReference type="Gene3D" id="3.30.70.270">
    <property type="match status" value="2"/>
</dbReference>
<dbReference type="Gene3D" id="2.40.70.10">
    <property type="entry name" value="Acid Proteases"/>
    <property type="match status" value="1"/>
</dbReference>
<dbReference type="Gene3D" id="3.10.10.10">
    <property type="entry name" value="HIV Type 1 Reverse Transcriptase, subunit A, domain 1"/>
    <property type="match status" value="1"/>
</dbReference>
<dbReference type="Gene3D" id="3.30.420.10">
    <property type="entry name" value="Ribonuclease H-like superfamily/Ribonuclease H"/>
    <property type="match status" value="1"/>
</dbReference>
<dbReference type="InterPro" id="IPR001969">
    <property type="entry name" value="Aspartic_peptidase_AS"/>
</dbReference>
<dbReference type="InterPro" id="IPR043502">
    <property type="entry name" value="DNA/RNA_pol_sf"/>
</dbReference>
<dbReference type="InterPro" id="IPR001584">
    <property type="entry name" value="Integrase_cat-core"/>
</dbReference>
<dbReference type="InterPro" id="IPR041588">
    <property type="entry name" value="Integrase_H2C2"/>
</dbReference>
<dbReference type="InterPro" id="IPR001995">
    <property type="entry name" value="Peptidase_A2_cat"/>
</dbReference>
<dbReference type="InterPro" id="IPR021109">
    <property type="entry name" value="Peptidase_aspartic_dom_sf"/>
</dbReference>
<dbReference type="InterPro" id="IPR018061">
    <property type="entry name" value="Retropepsins"/>
</dbReference>
<dbReference type="InterPro" id="IPR050951">
    <property type="entry name" value="Retrovirus_Pol_polyprotein"/>
</dbReference>
<dbReference type="InterPro" id="IPR043128">
    <property type="entry name" value="Rev_trsase/Diguanyl_cyclase"/>
</dbReference>
<dbReference type="InterPro" id="IPR012337">
    <property type="entry name" value="RNaseH-like_sf"/>
</dbReference>
<dbReference type="InterPro" id="IPR036397">
    <property type="entry name" value="RNaseH_sf"/>
</dbReference>
<dbReference type="InterPro" id="IPR000477">
    <property type="entry name" value="RT_dom"/>
</dbReference>
<dbReference type="InterPro" id="IPR041373">
    <property type="entry name" value="RT_RNaseH"/>
</dbReference>
<dbReference type="PANTHER" id="PTHR37984">
    <property type="entry name" value="PROTEIN CBG26694"/>
    <property type="match status" value="1"/>
</dbReference>
<dbReference type="PANTHER" id="PTHR37984:SF5">
    <property type="entry name" value="PROTEIN NYNRIN-LIKE"/>
    <property type="match status" value="1"/>
</dbReference>
<dbReference type="Pfam" id="PF17921">
    <property type="entry name" value="Integrase_H2C2"/>
    <property type="match status" value="1"/>
</dbReference>
<dbReference type="Pfam" id="PF17917">
    <property type="entry name" value="RT_RNaseH"/>
    <property type="match status" value="1"/>
</dbReference>
<dbReference type="Pfam" id="PF00665">
    <property type="entry name" value="rve"/>
    <property type="match status" value="1"/>
</dbReference>
<dbReference type="Pfam" id="PF00077">
    <property type="entry name" value="RVP"/>
    <property type="match status" value="1"/>
</dbReference>
<dbReference type="Pfam" id="PF00078">
    <property type="entry name" value="RVT_1"/>
    <property type="match status" value="1"/>
</dbReference>
<dbReference type="SUPFAM" id="SSF50630">
    <property type="entry name" value="Acid proteases"/>
    <property type="match status" value="1"/>
</dbReference>
<dbReference type="SUPFAM" id="SSF56672">
    <property type="entry name" value="DNA/RNA polymerases"/>
    <property type="match status" value="1"/>
</dbReference>
<dbReference type="SUPFAM" id="SSF53098">
    <property type="entry name" value="Ribonuclease H-like"/>
    <property type="match status" value="1"/>
</dbReference>
<dbReference type="PROSITE" id="PS50175">
    <property type="entry name" value="ASP_PROT_RETROV"/>
    <property type="match status" value="1"/>
</dbReference>
<dbReference type="PROSITE" id="PS00141">
    <property type="entry name" value="ASP_PROTEASE"/>
    <property type="match status" value="1"/>
</dbReference>
<dbReference type="PROSITE" id="PS50994">
    <property type="entry name" value="INTEGRASE"/>
    <property type="match status" value="1"/>
</dbReference>
<dbReference type="PROSITE" id="PS50878">
    <property type="entry name" value="RT_POL"/>
    <property type="match status" value="1"/>
</dbReference>
<comment type="catalytic activity">
    <reaction evidence="2">
        <text>DNA(n) + a 2'-deoxyribonucleoside 5'-triphosphate = DNA(n+1) + diphosphate</text>
        <dbReference type="Rhea" id="RHEA:22508"/>
        <dbReference type="Rhea" id="RHEA-COMP:17339"/>
        <dbReference type="Rhea" id="RHEA-COMP:17340"/>
        <dbReference type="ChEBI" id="CHEBI:33019"/>
        <dbReference type="ChEBI" id="CHEBI:61560"/>
        <dbReference type="ChEBI" id="CHEBI:173112"/>
        <dbReference type="EC" id="2.7.7.49"/>
    </reaction>
</comment>
<name>POL4_DROME</name>
<feature type="chain" id="PRO_0000199558" description="Retrovirus-related Pol polyprotein from transposon 412">
    <location>
        <begin position="1"/>
        <end position="1237"/>
    </location>
</feature>
<feature type="domain" description="Peptidase A2" evidence="1">
    <location>
        <begin position="58"/>
        <end position="131"/>
    </location>
</feature>
<feature type="domain" description="Reverse transcriptase" evidence="2">
    <location>
        <begin position="338"/>
        <end position="523"/>
    </location>
</feature>
<feature type="domain" description="Integrase catalytic" evidence="3">
    <location>
        <begin position="957"/>
        <end position="1119"/>
    </location>
</feature>
<feature type="active site" description="For protease activity" evidence="4">
    <location>
        <position position="63"/>
    </location>
</feature>
<reference key="1">
    <citation type="journal article" date="1986" name="Eur. J. Biochem.">
        <title>Nucleotide sequence characterization of a Drosophila retrotransposon, 412.</title>
        <authorList>
            <person name="Yuki S."/>
            <person name="Inouye S."/>
            <person name="Ishimaru S."/>
            <person name="Saigo K."/>
        </authorList>
    </citation>
    <scope>NUCLEOTIDE SEQUENCE [GENOMIC DNA]</scope>
</reference>
<gene>
    <name type="primary">POL</name>
    <name type="synonym">ORF3</name>
</gene>
<evidence type="ECO:0000255" key="1">
    <source>
        <dbReference type="PROSITE-ProRule" id="PRU00275"/>
    </source>
</evidence>
<evidence type="ECO:0000255" key="2">
    <source>
        <dbReference type="PROSITE-ProRule" id="PRU00405"/>
    </source>
</evidence>
<evidence type="ECO:0000255" key="3">
    <source>
        <dbReference type="PROSITE-ProRule" id="PRU00457"/>
    </source>
</evidence>
<evidence type="ECO:0000255" key="4">
    <source>
        <dbReference type="PROSITE-ProRule" id="PRU10094"/>
    </source>
</evidence>